<gene>
    <name evidence="1" type="primary">xylA</name>
    <name type="ordered locus">MS2373</name>
</gene>
<reference key="1">
    <citation type="journal article" date="2004" name="Nat. Biotechnol.">
        <title>The genome sequence of the capnophilic rumen bacterium Mannheimia succiniciproducens.</title>
        <authorList>
            <person name="Hong S.H."/>
            <person name="Kim J.S."/>
            <person name="Lee S.Y."/>
            <person name="In Y.H."/>
            <person name="Choi S.S."/>
            <person name="Rih J.-K."/>
            <person name="Kim C.H."/>
            <person name="Jeong H."/>
            <person name="Hur C.G."/>
            <person name="Kim J.J."/>
        </authorList>
    </citation>
    <scope>NUCLEOTIDE SEQUENCE [LARGE SCALE GENOMIC DNA]</scope>
    <source>
        <strain>KCTC 0769BP / MBEL55E</strain>
    </source>
</reference>
<keyword id="KW-0119">Carbohydrate metabolism</keyword>
<keyword id="KW-0963">Cytoplasm</keyword>
<keyword id="KW-0413">Isomerase</keyword>
<keyword id="KW-0460">Magnesium</keyword>
<keyword id="KW-0479">Metal-binding</keyword>
<keyword id="KW-0859">Xylose metabolism</keyword>
<proteinExistence type="inferred from homology"/>
<sequence>MTNYFDKIEKVKYEGADSTNPFAYKHYNANEVILGKTMAEHLRLAVCYWHTFCWNGNDMFGVGSLDRSWQKMSDPLAAAKQKADIAFEFLTKLGVPYYCFHDVDIAPEGNSYQEYVRNFNTIVDILEQKQAESGVKLLWGTANCFSNPRYMSGAATNPNPEIFTRAAAQVFNAMNATKRLGGENYVLWGGREGYETLLNTDLRREREQIGRFMQMVVEHKHKIGFSGTLLIEPKPQEPTKHQYDYDVATVYGFLKQFGLEKEIKVNIEANHATLAGHTFQHEIATAAALDILGSIDANRGDPQLGWDTDQFPNSVEENTLAIYEILKAGGLTTGGFNFDAKIRRQSINPYDLFHGHIGAIDVLALSLKRAAKMVEDHTLQNIVDQRYAGWNGELGQQILAGKSSLEALAQAAQNLDPNPVSGQQEYIENLVNGYIYR</sequence>
<evidence type="ECO:0000255" key="1">
    <source>
        <dbReference type="HAMAP-Rule" id="MF_00455"/>
    </source>
</evidence>
<comment type="catalytic activity">
    <reaction evidence="1">
        <text>alpha-D-xylose = alpha-D-xylulofuranose</text>
        <dbReference type="Rhea" id="RHEA:22816"/>
        <dbReference type="ChEBI" id="CHEBI:28518"/>
        <dbReference type="ChEBI" id="CHEBI:188998"/>
        <dbReference type="EC" id="5.3.1.5"/>
    </reaction>
</comment>
<comment type="cofactor">
    <cofactor evidence="1">
        <name>Mg(2+)</name>
        <dbReference type="ChEBI" id="CHEBI:18420"/>
    </cofactor>
    <text evidence="1">Binds 2 magnesium ions per subunit.</text>
</comment>
<comment type="subunit">
    <text evidence="1">Homotetramer.</text>
</comment>
<comment type="subcellular location">
    <subcellularLocation>
        <location evidence="1">Cytoplasm</location>
    </subcellularLocation>
</comment>
<comment type="similarity">
    <text evidence="1">Belongs to the xylose isomerase family.</text>
</comment>
<protein>
    <recommendedName>
        <fullName evidence="1">Xylose isomerase</fullName>
        <ecNumber evidence="1">5.3.1.5</ecNumber>
    </recommendedName>
</protein>
<accession>Q65PY0</accession>
<dbReference type="EC" id="5.3.1.5" evidence="1"/>
<dbReference type="EMBL" id="AE016827">
    <property type="protein sequence ID" value="AAU38980.1"/>
    <property type="molecule type" value="Genomic_DNA"/>
</dbReference>
<dbReference type="RefSeq" id="WP_011201518.1">
    <property type="nucleotide sequence ID" value="NC_006300.1"/>
</dbReference>
<dbReference type="SMR" id="Q65PY0"/>
<dbReference type="STRING" id="221988.MS2373"/>
<dbReference type="KEGG" id="msu:MS2373"/>
<dbReference type="eggNOG" id="COG2115">
    <property type="taxonomic scope" value="Bacteria"/>
</dbReference>
<dbReference type="HOGENOM" id="CLU_037261_1_0_6"/>
<dbReference type="OrthoDB" id="9763981at2"/>
<dbReference type="Proteomes" id="UP000000607">
    <property type="component" value="Chromosome"/>
</dbReference>
<dbReference type="GO" id="GO:0005737">
    <property type="term" value="C:cytoplasm"/>
    <property type="evidence" value="ECO:0007669"/>
    <property type="project" value="UniProtKB-SubCell"/>
</dbReference>
<dbReference type="GO" id="GO:0000287">
    <property type="term" value="F:magnesium ion binding"/>
    <property type="evidence" value="ECO:0007669"/>
    <property type="project" value="UniProtKB-UniRule"/>
</dbReference>
<dbReference type="GO" id="GO:0009045">
    <property type="term" value="F:xylose isomerase activity"/>
    <property type="evidence" value="ECO:0007669"/>
    <property type="project" value="UniProtKB-UniRule"/>
</dbReference>
<dbReference type="GO" id="GO:0042732">
    <property type="term" value="P:D-xylose metabolic process"/>
    <property type="evidence" value="ECO:0007669"/>
    <property type="project" value="UniProtKB-UniRule"/>
</dbReference>
<dbReference type="FunFam" id="3.20.20.150:FF:000002">
    <property type="entry name" value="Xylose isomerase"/>
    <property type="match status" value="1"/>
</dbReference>
<dbReference type="Gene3D" id="3.20.20.150">
    <property type="entry name" value="Divalent-metal-dependent TIM barrel enzymes"/>
    <property type="match status" value="1"/>
</dbReference>
<dbReference type="HAMAP" id="MF_00455">
    <property type="entry name" value="Xylose_isom_A"/>
    <property type="match status" value="1"/>
</dbReference>
<dbReference type="InterPro" id="IPR036237">
    <property type="entry name" value="Xyl_isomerase-like_sf"/>
</dbReference>
<dbReference type="InterPro" id="IPR013452">
    <property type="entry name" value="Xylose_isom_bac"/>
</dbReference>
<dbReference type="InterPro" id="IPR001998">
    <property type="entry name" value="Xylose_isomerase"/>
</dbReference>
<dbReference type="NCBIfam" id="NF003998">
    <property type="entry name" value="PRK05474.1"/>
    <property type="match status" value="1"/>
</dbReference>
<dbReference type="NCBIfam" id="TIGR02630">
    <property type="entry name" value="xylose_isom_A"/>
    <property type="match status" value="1"/>
</dbReference>
<dbReference type="PANTHER" id="PTHR48408">
    <property type="match status" value="1"/>
</dbReference>
<dbReference type="PANTHER" id="PTHR48408:SF1">
    <property type="entry name" value="XYLOSE ISOMERASE"/>
    <property type="match status" value="1"/>
</dbReference>
<dbReference type="PRINTS" id="PR00688">
    <property type="entry name" value="XYLOSISMRASE"/>
</dbReference>
<dbReference type="SUPFAM" id="SSF51658">
    <property type="entry name" value="Xylose isomerase-like"/>
    <property type="match status" value="1"/>
</dbReference>
<dbReference type="PROSITE" id="PS51415">
    <property type="entry name" value="XYLOSE_ISOMERASE"/>
    <property type="match status" value="1"/>
</dbReference>
<feature type="chain" id="PRO_0000236964" description="Xylose isomerase">
    <location>
        <begin position="1"/>
        <end position="437"/>
    </location>
</feature>
<feature type="active site" evidence="1">
    <location>
        <position position="101"/>
    </location>
</feature>
<feature type="active site" evidence="1">
    <location>
        <position position="104"/>
    </location>
</feature>
<feature type="binding site" evidence="1">
    <location>
        <position position="232"/>
    </location>
    <ligand>
        <name>Mg(2+)</name>
        <dbReference type="ChEBI" id="CHEBI:18420"/>
        <label>1</label>
    </ligand>
</feature>
<feature type="binding site" evidence="1">
    <location>
        <position position="268"/>
    </location>
    <ligand>
        <name>Mg(2+)</name>
        <dbReference type="ChEBI" id="CHEBI:18420"/>
        <label>1</label>
    </ligand>
</feature>
<feature type="binding site" evidence="1">
    <location>
        <position position="268"/>
    </location>
    <ligand>
        <name>Mg(2+)</name>
        <dbReference type="ChEBI" id="CHEBI:18420"/>
        <label>2</label>
    </ligand>
</feature>
<feature type="binding site" evidence="1">
    <location>
        <position position="271"/>
    </location>
    <ligand>
        <name>Mg(2+)</name>
        <dbReference type="ChEBI" id="CHEBI:18420"/>
        <label>2</label>
    </ligand>
</feature>
<feature type="binding site" evidence="1">
    <location>
        <position position="296"/>
    </location>
    <ligand>
        <name>Mg(2+)</name>
        <dbReference type="ChEBI" id="CHEBI:18420"/>
        <label>1</label>
    </ligand>
</feature>
<feature type="binding site" evidence="1">
    <location>
        <position position="307"/>
    </location>
    <ligand>
        <name>Mg(2+)</name>
        <dbReference type="ChEBI" id="CHEBI:18420"/>
        <label>2</label>
    </ligand>
</feature>
<feature type="binding site" evidence="1">
    <location>
        <position position="309"/>
    </location>
    <ligand>
        <name>Mg(2+)</name>
        <dbReference type="ChEBI" id="CHEBI:18420"/>
        <label>2</label>
    </ligand>
</feature>
<feature type="binding site" evidence="1">
    <location>
        <position position="339"/>
    </location>
    <ligand>
        <name>Mg(2+)</name>
        <dbReference type="ChEBI" id="CHEBI:18420"/>
        <label>1</label>
    </ligand>
</feature>
<organism>
    <name type="scientific">Mannheimia succiniciproducens (strain KCTC 0769BP / MBEL55E)</name>
    <dbReference type="NCBI Taxonomy" id="221988"/>
    <lineage>
        <taxon>Bacteria</taxon>
        <taxon>Pseudomonadati</taxon>
        <taxon>Pseudomonadota</taxon>
        <taxon>Gammaproteobacteria</taxon>
        <taxon>Pasteurellales</taxon>
        <taxon>Pasteurellaceae</taxon>
        <taxon>Basfia</taxon>
    </lineage>
</organism>
<name>XYLA_MANSM</name>